<protein>
    <recommendedName>
        <fullName evidence="6">Cytochrome P450 monooxygenase mpaDE</fullName>
        <ecNumber evidence="4">1.-.-.-</ecNumber>
    </recommendedName>
    <alternativeName>
        <fullName evidence="5">Mycophenolic acid biosynthesis cluster fusion protein DE</fullName>
    </alternativeName>
</protein>
<accession>I7LRH3</accession>
<accession>F1DBB0</accession>
<accession>F1DBB1</accession>
<reference key="1">
    <citation type="journal article" date="2011" name="Appl. Environ. Microbiol.">
        <title>Molecular basis for mycophenolic acid biosynthesis in Penicillium brevicompactum.</title>
        <authorList>
            <person name="Regueira T.B."/>
            <person name="Kildegaard K.R."/>
            <person name="Hansen B.G."/>
            <person name="Mortensen U.H."/>
            <person name="Hertweck C."/>
            <person name="Nielsen J."/>
        </authorList>
    </citation>
    <scope>NUCLEOTIDE SEQUENCE [GENOMIC DNA]</scope>
    <source>
        <strain>IBT 23078</strain>
    </source>
</reference>
<reference key="2">
    <citation type="journal article" date="2012" name="Appl. Environ. Microbiol.">
        <title>Involvement of a natural fusion of a cytochrome p450 and a hydrolase in mycophenolic acid biosynthesis.</title>
        <authorList>
            <person name="Hansen B.G."/>
            <person name="Mnich E."/>
            <person name="Nielsen K.F."/>
            <person name="Nielsen J.B."/>
            <person name="Nielsen M.T."/>
            <person name="Mortensen U.H."/>
            <person name="Larsen T.O."/>
            <person name="Patil K.R."/>
        </authorList>
    </citation>
    <scope>NUCLEOTIDE SEQUENCE [GENOMIC DNA]</scope>
    <scope>FUNCTION</scope>
    <scope>CATALYTIC ACTIVITY</scope>
    <scope>PATHWAY</scope>
    <source>
        <strain>IBT23078</strain>
    </source>
</reference>
<reference key="3">
    <citation type="journal article" date="2015" name="ChemBioChem">
        <title>Functional characterization of MpaG', the O-methyltransferase involved in the biosynthesis of mycophenolic acid.</title>
        <authorList>
            <person name="Zhang W."/>
            <person name="Cao S."/>
            <person name="Qiu L."/>
            <person name="Qi F."/>
            <person name="Li Z."/>
            <person name="Yang Y."/>
            <person name="Huang S."/>
            <person name="Bai F."/>
            <person name="Liu C."/>
            <person name="Wan X."/>
            <person name="Li S."/>
        </authorList>
    </citation>
    <scope>FUNCTION</scope>
</reference>
<gene>
    <name evidence="6" type="primary">mpaDE</name>
    <name evidence="5" type="synonym">mpaD</name>
    <name evidence="5" type="synonym">mpaE</name>
</gene>
<sequence length="853" mass="96366">MKSLSLTWITAVAVVLYLVQRYVRSYWRLKDIPGPVLAKLTDLQRVWWVKTGRAHEFHRDMHAMYGPIVRFGPNMVSVSDPRVIPTIYPSRPGFPKGDFYRTQKPYTRNKGAMPAVFNTQDEDLHKQLRSPIASLYSMTNVVRLEPLVDETLTVLSKQLDERFVGTNDKPFDLGDWLQYFAFDSMGTLTFSRRYGFLEQGRDMHGILQEIWNFMTRVAVMGQIPWFDEIWNKNSFITLFKRPTGFGVLKVVDNFISQRVSSRENDEKADEKDMLSQFLDIQASNPHSIMPWAPRAWTFSNVMAGSDSTANVMRTMMYNLLVDRDTLRSLRAELLEAENSNGLSRSLPSWDGVRSLPYLDACVLEALRLHPPFCLPFERVVPEGGITVCETYLPAGTVVGISPYLANRDKQTFGDDADKWRPSRWLDLSREDRVKLENSILTFGAGRRTCLGKNIAILEIKKLFPMLLLNYEIEIVNPENYQTTNAWFFRQWGLQAVIRKLPAPERDDTIEQKASIPPALNIPPSSSTVEVRIIDSGTLLDLRPDLFWTPDLPGLLKVTAPTYCFLISNGTRHVLFDLAVRQDWENLPPSIVAMIKSQTVIQEPRNISDVLDSDESSLGVRSKDIEAIIWSHAHFDHIGDPSTFPPSTELVVGPGIRDTHWPGFPTNPDAINLNTDIQGRNVREISFEKTQKGATKIGSFDAVDYFGDGSFYLLDAAGHSVGHIGALARVTTSPVSFVFMGGDSCHHAGVLRPTKYLPCPLDSGDTSLPCKSDSVFTLSPALPTDYTAALRTVENIKELDACEDVFVVLAHDATLKGKVDFYPSKINDWKAKEYGKKTKWLFYKDIENSIEGQK</sequence>
<dbReference type="EC" id="1.-.-.-" evidence="4"/>
<dbReference type="EMBL" id="BK008023">
    <property type="protein sequence ID" value="DAA35181.1"/>
    <property type="molecule type" value="Genomic_DNA"/>
</dbReference>
<dbReference type="EMBL" id="HQ731031">
    <property type="protein sequence ID" value="ADY00131.1"/>
    <property type="status" value="ALT_SEQ"/>
    <property type="molecule type" value="Genomic_DNA"/>
</dbReference>
<dbReference type="EMBL" id="HQ731031">
    <property type="protein sequence ID" value="ADY00132.1"/>
    <property type="status" value="ALT_SEQ"/>
    <property type="molecule type" value="Genomic_DNA"/>
</dbReference>
<dbReference type="SMR" id="I7LRH3"/>
<dbReference type="UniPathway" id="UPA00213"/>
<dbReference type="GO" id="GO:0005789">
    <property type="term" value="C:endoplasmic reticulum membrane"/>
    <property type="evidence" value="ECO:0000250"/>
    <property type="project" value="GO_Central"/>
</dbReference>
<dbReference type="GO" id="GO:0020037">
    <property type="term" value="F:heme binding"/>
    <property type="evidence" value="ECO:0007669"/>
    <property type="project" value="InterPro"/>
</dbReference>
<dbReference type="GO" id="GO:0005506">
    <property type="term" value="F:iron ion binding"/>
    <property type="evidence" value="ECO:0007669"/>
    <property type="project" value="InterPro"/>
</dbReference>
<dbReference type="GO" id="GO:0004497">
    <property type="term" value="F:monooxygenase activity"/>
    <property type="evidence" value="ECO:0000314"/>
    <property type="project" value="GO_Central"/>
</dbReference>
<dbReference type="GO" id="GO:0016705">
    <property type="term" value="F:oxidoreductase activity, acting on paired donors, with incorporation or reduction of molecular oxygen"/>
    <property type="evidence" value="ECO:0007669"/>
    <property type="project" value="InterPro"/>
</dbReference>
<dbReference type="GO" id="GO:0140722">
    <property type="term" value="P:mycophenolic acid biosynthetic process"/>
    <property type="evidence" value="ECO:0000314"/>
    <property type="project" value="GO_Central"/>
</dbReference>
<dbReference type="GO" id="GO:0016114">
    <property type="term" value="P:terpenoid biosynthetic process"/>
    <property type="evidence" value="ECO:0007669"/>
    <property type="project" value="UniProtKB-UniPathway"/>
</dbReference>
<dbReference type="CDD" id="cd11060">
    <property type="entry name" value="CYP57A1-like"/>
    <property type="match status" value="1"/>
</dbReference>
<dbReference type="CDD" id="cd07730">
    <property type="entry name" value="metallo-hydrolase-like_MBL-fold"/>
    <property type="match status" value="1"/>
</dbReference>
<dbReference type="Gene3D" id="1.10.630.10">
    <property type="entry name" value="Cytochrome P450"/>
    <property type="match status" value="1"/>
</dbReference>
<dbReference type="Gene3D" id="3.60.15.10">
    <property type="entry name" value="Ribonuclease Z/Hydroxyacylglutathione hydrolase-like"/>
    <property type="match status" value="1"/>
</dbReference>
<dbReference type="InterPro" id="IPR001128">
    <property type="entry name" value="Cyt_P450"/>
</dbReference>
<dbReference type="InterPro" id="IPR017972">
    <property type="entry name" value="Cyt_P450_CS"/>
</dbReference>
<dbReference type="InterPro" id="IPR002403">
    <property type="entry name" value="Cyt_P450_E_grp-IV"/>
</dbReference>
<dbReference type="InterPro" id="IPR036396">
    <property type="entry name" value="Cyt_P450_sf"/>
</dbReference>
<dbReference type="InterPro" id="IPR050121">
    <property type="entry name" value="Cytochrome_P450_monoxygenase"/>
</dbReference>
<dbReference type="InterPro" id="IPR001279">
    <property type="entry name" value="Metallo-B-lactamas"/>
</dbReference>
<dbReference type="InterPro" id="IPR036866">
    <property type="entry name" value="RibonucZ/Hydroxyglut_hydro"/>
</dbReference>
<dbReference type="PANTHER" id="PTHR24305">
    <property type="entry name" value="CYTOCHROME P450"/>
    <property type="match status" value="1"/>
</dbReference>
<dbReference type="PANTHER" id="PTHR24305:SF175">
    <property type="entry name" value="CYTOCHROME P450 MONOOXYGENASE PKFB"/>
    <property type="match status" value="1"/>
</dbReference>
<dbReference type="Pfam" id="PF00753">
    <property type="entry name" value="Lactamase_B"/>
    <property type="match status" value="1"/>
</dbReference>
<dbReference type="Pfam" id="PF00067">
    <property type="entry name" value="p450"/>
    <property type="match status" value="1"/>
</dbReference>
<dbReference type="PRINTS" id="PR00465">
    <property type="entry name" value="EP450IV"/>
</dbReference>
<dbReference type="PRINTS" id="PR00385">
    <property type="entry name" value="P450"/>
</dbReference>
<dbReference type="SUPFAM" id="SSF48264">
    <property type="entry name" value="Cytochrome P450"/>
    <property type="match status" value="1"/>
</dbReference>
<dbReference type="SUPFAM" id="SSF56281">
    <property type="entry name" value="Metallo-hydrolase/oxidoreductase"/>
    <property type="match status" value="1"/>
</dbReference>
<dbReference type="PROSITE" id="PS00086">
    <property type="entry name" value="CYTOCHROME_P450"/>
    <property type="match status" value="1"/>
</dbReference>
<name>MPADE_PENBR</name>
<evidence type="ECO:0000250" key="1">
    <source>
        <dbReference type="UniProtKB" id="A0A0B5KYT4"/>
    </source>
</evidence>
<evidence type="ECO:0000250" key="2">
    <source>
        <dbReference type="UniProtKB" id="P04798"/>
    </source>
</evidence>
<evidence type="ECO:0000255" key="3"/>
<evidence type="ECO:0000269" key="4">
    <source>
    </source>
</evidence>
<evidence type="ECO:0000303" key="5">
    <source>
    </source>
</evidence>
<evidence type="ECO:0000303" key="6">
    <source>
    </source>
</evidence>
<evidence type="ECO:0000305" key="7"/>
<evidence type="ECO:0000305" key="8">
    <source>
    </source>
</evidence>
<evidence type="ECO:0000305" key="9">
    <source>
    </source>
</evidence>
<organism>
    <name type="scientific">Penicillium brevicompactum</name>
    <dbReference type="NCBI Taxonomy" id="5074"/>
    <lineage>
        <taxon>Eukaryota</taxon>
        <taxon>Fungi</taxon>
        <taxon>Dikarya</taxon>
        <taxon>Ascomycota</taxon>
        <taxon>Pezizomycotina</taxon>
        <taxon>Eurotiomycetes</taxon>
        <taxon>Eurotiomycetidae</taxon>
        <taxon>Eurotiales</taxon>
        <taxon>Aspergillaceae</taxon>
        <taxon>Penicillium</taxon>
    </lineage>
</organism>
<comment type="function">
    <text evidence="4 8 9">Cytochrome P450 monooxygenase; part of the gene cluster that mediates the biosynthesis of mycophenolic acid (MPA), the first isolated antibiotic natural product in the world obtained from a culture of Penicillium brevicompactum in 1893 (PubMed:22544261). MpaDE is an endoplasmic reticulum-bound enzyme that catalyzes the conversion of 5-methylorsellinic acid (5MOA) into the phthalide compound 5,7-dihydroxy-4,6-dimethylphthalide (DHMP) (PubMed:22544261). MpaDE first catalyzes hydroxylation of 5-MOA to 4,6-dihydroxy-2-(hydroxymethyl)-3-methylbenzoic acid (DHMB), and then acts as a lactone synthase that catalyzes the ring closure to convert DHMB into DHMP (PubMed:22544261). The first step of the pathway is the synthesis of 5-methylorsellinic acid (5MOA) by the cytosolic polyketide synthase mpaC. 5MOA is then converted to the phthalide compound 5,7-dihydroxy-4,6-dimethylphthalide (DHMP) by the endoplasmic reticulum-bound cytochrome P450 monooxygenase mpaDE. MpaDE first catalyzes hydroxylation of 5-MOA to 4,6-dihydroxy-2-(hydroxymethyl)-3-methylbenzoic acid (DHMB). MpaDE then acts as a lactone synthase that catalyzes the ring closure to convert DHMB into DHMP. The next step is the prenylation of DHMP by the Golgi apparatus-associated prenyltransferase mpaA to yield farnesyl-DHMP (FDHMP). The ER-bound oxygenase mpaB then mediates the oxidative cleavage the C19-C20 double bond in FDHMP to yield FDHMP-3C via a mycophenolic aldehyde intermediate. The O-methyltransferase mpaG catalyzes the methylation of FDHMP-3C to yield MFDHMP-3C. After the cytosolic methylation of FDHMP-3C, MFDHMP-3C enters into peroxisomes probably via free diffusion due to its low molecular weight. Upon a peroxisomal CoA ligation reaction, catalyzed by a beta-oxidation component enzyme acyl-CoA ligase ACL891, MFDHMP-3C-CoA would then be restricted to peroxisomes for the following beta-oxidation pathway steps. The peroxisomal beta-oxidation machinery than converts MFDHMP-3C-CoA into MPA_CoA, via a beta-oxidation chain-shortening process. Finally mpaH acts as a peroxisomal acyl-CoA hydrolase with high substrate specificity toward MPA-CoA to release the final product MPA (Probable) (PubMed:21398490, PubMed:22544261).</text>
</comment>
<comment type="catalytic activity">
    <reaction evidence="4">
        <text>5-methylorsellinate + reduced [NADPH--hemoprotein reductase] + O2 = 4,6-dihydroxy-2-(hydroxymethyl)-3-methylbenzoate + oxidized [NADPH--hemoprotein reductase] + H2O + H(+)</text>
        <dbReference type="Rhea" id="RHEA:66668"/>
        <dbReference type="Rhea" id="RHEA-COMP:11964"/>
        <dbReference type="Rhea" id="RHEA-COMP:11965"/>
        <dbReference type="ChEBI" id="CHEBI:15377"/>
        <dbReference type="ChEBI" id="CHEBI:15378"/>
        <dbReference type="ChEBI" id="CHEBI:15379"/>
        <dbReference type="ChEBI" id="CHEBI:57618"/>
        <dbReference type="ChEBI" id="CHEBI:58210"/>
        <dbReference type="ChEBI" id="CHEBI:146172"/>
        <dbReference type="ChEBI" id="CHEBI:167385"/>
    </reaction>
    <physiologicalReaction direction="left-to-right" evidence="4">
        <dbReference type="Rhea" id="RHEA:66669"/>
    </physiologicalReaction>
</comment>
<comment type="catalytic activity">
    <reaction evidence="4">
        <text>4,6-dihydroxy-2-(hydroxymethyl)-3-methylbenzoate + H(+) = 5,7-dihydroxy-4-methylphthalide + H2O</text>
        <dbReference type="Rhea" id="RHEA:66672"/>
        <dbReference type="ChEBI" id="CHEBI:15377"/>
        <dbReference type="ChEBI" id="CHEBI:15378"/>
        <dbReference type="ChEBI" id="CHEBI:68194"/>
        <dbReference type="ChEBI" id="CHEBI:167385"/>
    </reaction>
    <physiologicalReaction direction="left-to-right" evidence="4">
        <dbReference type="Rhea" id="RHEA:66673"/>
    </physiologicalReaction>
</comment>
<comment type="cofactor">
    <cofactor evidence="2">
        <name>heme</name>
        <dbReference type="ChEBI" id="CHEBI:30413"/>
    </cofactor>
</comment>
<comment type="pathway">
    <text evidence="4">Secondary metabolite biosynthesis; terpenoid biosynthesis.</text>
</comment>
<comment type="subcellular location">
    <subcellularLocation>
        <location evidence="1">Endoplasmic reticulum membrane</location>
        <topology evidence="3">Single-pass membrane protein</topology>
    </subcellularLocation>
</comment>
<comment type="similarity">
    <text evidence="7">Belongs to the cytochrome P450 family.</text>
</comment>
<comment type="sequence caution" evidence="7">
    <conflict type="erroneous gene model prediction">
        <sequence resource="EMBL-CDS" id="ADY00131"/>
    </conflict>
</comment>
<comment type="sequence caution" evidence="7">
    <conflict type="erroneous gene model prediction">
        <sequence resource="EMBL-CDS" id="ADY00132"/>
    </conflict>
</comment>
<proteinExistence type="evidence at protein level"/>
<keyword id="KW-0256">Endoplasmic reticulum</keyword>
<keyword id="KW-0349">Heme</keyword>
<keyword id="KW-0408">Iron</keyword>
<keyword id="KW-0472">Membrane</keyword>
<keyword id="KW-0479">Metal-binding</keyword>
<keyword id="KW-0503">Monooxygenase</keyword>
<keyword id="KW-0560">Oxidoreductase</keyword>
<keyword id="KW-0812">Transmembrane</keyword>
<keyword id="KW-1133">Transmembrane helix</keyword>
<feature type="chain" id="PRO_0000436573" description="Cytochrome P450 monooxygenase mpaDE">
    <location>
        <begin position="1"/>
        <end position="853"/>
    </location>
</feature>
<feature type="topological domain" description="Lumenal" evidence="7">
    <location>
        <begin position="1"/>
        <end position="6"/>
    </location>
</feature>
<feature type="transmembrane region" description="Helical" evidence="3">
    <location>
        <begin position="7"/>
        <end position="29"/>
    </location>
</feature>
<feature type="topological domain" description="Cytoplasmic" evidence="7">
    <location>
        <begin position="30"/>
        <end position="853"/>
    </location>
</feature>
<feature type="binding site" description="axial binding residue" evidence="2">
    <location>
        <position position="449"/>
    </location>
    <ligand>
        <name>heme</name>
        <dbReference type="ChEBI" id="CHEBI:30413"/>
    </ligand>
    <ligandPart>
        <name>Fe</name>
        <dbReference type="ChEBI" id="CHEBI:18248"/>
    </ligandPart>
</feature>